<reference key="1">
    <citation type="journal article" date="2004" name="J. Bacteriol.">
        <title>Complete genome sequence of Rickettsia typhi and comparison with sequences of other Rickettsiae.</title>
        <authorList>
            <person name="McLeod M.P."/>
            <person name="Qin X."/>
            <person name="Karpathy S.E."/>
            <person name="Gioia J."/>
            <person name="Highlander S.K."/>
            <person name="Fox G.E."/>
            <person name="McNeill T.Z."/>
            <person name="Jiang H."/>
            <person name="Muzny D."/>
            <person name="Jacob L.S."/>
            <person name="Hawes A.C."/>
            <person name="Sodergren E."/>
            <person name="Gill R."/>
            <person name="Hume J."/>
            <person name="Morgan M."/>
            <person name="Fan G."/>
            <person name="Amin A.G."/>
            <person name="Gibbs R.A."/>
            <person name="Hong C."/>
            <person name="Yu X.-J."/>
            <person name="Walker D.H."/>
            <person name="Weinstock G.M."/>
        </authorList>
    </citation>
    <scope>NUCLEOTIDE SEQUENCE [LARGE SCALE GENOMIC DNA]</scope>
    <source>
        <strain>ATCC VR-144 / Wilmington</strain>
    </source>
</reference>
<dbReference type="EC" id="3.2.2.-" evidence="1"/>
<dbReference type="EMBL" id="AE017197">
    <property type="protein sequence ID" value="AAU03820.1"/>
    <property type="molecule type" value="Genomic_DNA"/>
</dbReference>
<dbReference type="RefSeq" id="WP_011190804.1">
    <property type="nucleotide sequence ID" value="NC_006142.1"/>
</dbReference>
<dbReference type="SMR" id="Q68X22"/>
<dbReference type="KEGG" id="rty:RT0340"/>
<dbReference type="eggNOG" id="COG2094">
    <property type="taxonomic scope" value="Bacteria"/>
</dbReference>
<dbReference type="HOGENOM" id="CLU_060471_3_0_5"/>
<dbReference type="OrthoDB" id="9794313at2"/>
<dbReference type="Proteomes" id="UP000000604">
    <property type="component" value="Chromosome"/>
</dbReference>
<dbReference type="GO" id="GO:0003905">
    <property type="term" value="F:alkylbase DNA N-glycosylase activity"/>
    <property type="evidence" value="ECO:0007669"/>
    <property type="project" value="InterPro"/>
</dbReference>
<dbReference type="GO" id="GO:0003677">
    <property type="term" value="F:DNA binding"/>
    <property type="evidence" value="ECO:0007669"/>
    <property type="project" value="InterPro"/>
</dbReference>
<dbReference type="GO" id="GO:0006284">
    <property type="term" value="P:base-excision repair"/>
    <property type="evidence" value="ECO:0007669"/>
    <property type="project" value="InterPro"/>
</dbReference>
<dbReference type="CDD" id="cd00540">
    <property type="entry name" value="AAG"/>
    <property type="match status" value="1"/>
</dbReference>
<dbReference type="Gene3D" id="3.10.300.10">
    <property type="entry name" value="Methylpurine-DNA glycosylase (MPG)"/>
    <property type="match status" value="1"/>
</dbReference>
<dbReference type="HAMAP" id="MF_00527">
    <property type="entry name" value="3MGH"/>
    <property type="match status" value="1"/>
</dbReference>
<dbReference type="InterPro" id="IPR011034">
    <property type="entry name" value="Formyl_transferase-like_C_sf"/>
</dbReference>
<dbReference type="InterPro" id="IPR003180">
    <property type="entry name" value="MPG"/>
</dbReference>
<dbReference type="InterPro" id="IPR036995">
    <property type="entry name" value="MPG_sf"/>
</dbReference>
<dbReference type="NCBIfam" id="TIGR00567">
    <property type="entry name" value="3mg"/>
    <property type="match status" value="1"/>
</dbReference>
<dbReference type="NCBIfam" id="NF002004">
    <property type="entry name" value="PRK00802.1-4"/>
    <property type="match status" value="1"/>
</dbReference>
<dbReference type="PANTHER" id="PTHR10429">
    <property type="entry name" value="DNA-3-METHYLADENINE GLYCOSYLASE"/>
    <property type="match status" value="1"/>
</dbReference>
<dbReference type="PANTHER" id="PTHR10429:SF0">
    <property type="entry name" value="DNA-3-METHYLADENINE GLYCOSYLASE"/>
    <property type="match status" value="1"/>
</dbReference>
<dbReference type="Pfam" id="PF02245">
    <property type="entry name" value="Pur_DNA_glyco"/>
    <property type="match status" value="1"/>
</dbReference>
<dbReference type="SUPFAM" id="SSF50486">
    <property type="entry name" value="FMT C-terminal domain-like"/>
    <property type="match status" value="1"/>
</dbReference>
<feature type="chain" id="PRO_0000265056" description="Putative 3-methyladenine DNA glycosylase">
    <location>
        <begin position="1"/>
        <end position="223"/>
    </location>
</feature>
<protein>
    <recommendedName>
        <fullName evidence="1">Putative 3-methyladenine DNA glycosylase</fullName>
        <ecNumber evidence="1">3.2.2.-</ecNumber>
    </recommendedName>
</protein>
<organism>
    <name type="scientific">Rickettsia typhi (strain ATCC VR-144 / Wilmington)</name>
    <dbReference type="NCBI Taxonomy" id="257363"/>
    <lineage>
        <taxon>Bacteria</taxon>
        <taxon>Pseudomonadati</taxon>
        <taxon>Pseudomonadota</taxon>
        <taxon>Alphaproteobacteria</taxon>
        <taxon>Rickettsiales</taxon>
        <taxon>Rickettsiaceae</taxon>
        <taxon>Rickettsieae</taxon>
        <taxon>Rickettsia</taxon>
        <taxon>typhus group</taxon>
    </lineage>
</organism>
<proteinExistence type="inferred from homology"/>
<comment type="similarity">
    <text evidence="1">Belongs to the DNA glycosylase MPG family.</text>
</comment>
<keyword id="KW-0227">DNA damage</keyword>
<keyword id="KW-0234">DNA repair</keyword>
<keyword id="KW-0378">Hydrolase</keyword>
<evidence type="ECO:0000255" key="1">
    <source>
        <dbReference type="HAMAP-Rule" id="MF_00527"/>
    </source>
</evidence>
<sequence>MNKLIPLPREFFARDTNLVSTELIGKVLYFQGTTAIITETESYIGNDDPACHAARGRTKRTDVMFGPAGFSYVYLIYGMYHCLNFVTEDEGFPAATLIRGVYVISHNDLYTIYTAKVKSQITDEKTQSIIISEDRRSTKFDIPNLEESNLYLNGPGKLCKYLGINTTHNKCDLINNKDFFVSDIGLNLPYSTTKRIGITKGTDKLWRYIVTDNKNALLNINIL</sequence>
<name>3MGH_RICTY</name>
<accession>Q68X22</accession>
<gene>
    <name type="ordered locus">RT0340</name>
</gene>